<comment type="function">
    <text evidence="1">Catalyzes the conversion of acetate into acetyl-CoA (AcCoA), an essential intermediate at the junction of anabolic and catabolic pathways. AcsA undergoes a two-step reaction. In the first half reaction, AcsA combines acetate with ATP to form acetyl-adenylate (AcAMP) intermediate. In the second half reaction, it can then transfer the acetyl group from AcAMP to the sulfhydryl group of CoA, forming the product AcCoA.</text>
</comment>
<comment type="catalytic activity">
    <reaction evidence="1">
        <text>acetate + ATP + CoA = acetyl-CoA + AMP + diphosphate</text>
        <dbReference type="Rhea" id="RHEA:23176"/>
        <dbReference type="ChEBI" id="CHEBI:30089"/>
        <dbReference type="ChEBI" id="CHEBI:30616"/>
        <dbReference type="ChEBI" id="CHEBI:33019"/>
        <dbReference type="ChEBI" id="CHEBI:57287"/>
        <dbReference type="ChEBI" id="CHEBI:57288"/>
        <dbReference type="ChEBI" id="CHEBI:456215"/>
        <dbReference type="EC" id="6.2.1.1"/>
    </reaction>
</comment>
<comment type="cofactor">
    <cofactor evidence="1">
        <name>Mg(2+)</name>
        <dbReference type="ChEBI" id="CHEBI:18420"/>
    </cofactor>
</comment>
<comment type="PTM">
    <text evidence="1">Acetylated. Deacetylation by the SIR2-homolog deacetylase activates the enzyme.</text>
</comment>
<comment type="similarity">
    <text evidence="1">Belongs to the ATP-dependent AMP-binding enzyme family.</text>
</comment>
<keyword id="KW-0007">Acetylation</keyword>
<keyword id="KW-0067">ATP-binding</keyword>
<keyword id="KW-0436">Ligase</keyword>
<keyword id="KW-0460">Magnesium</keyword>
<keyword id="KW-0479">Metal-binding</keyword>
<keyword id="KW-0547">Nucleotide-binding</keyword>
<keyword id="KW-1185">Reference proteome</keyword>
<gene>
    <name evidence="1" type="primary">acsA</name>
    <name type="ordered locus">DR_2471</name>
</gene>
<organism>
    <name type="scientific">Deinococcus radiodurans (strain ATCC 13939 / DSM 20539 / JCM 16871 / CCUG 27074 / LMG 4051 / NBRC 15346 / NCIMB 9279 / VKM B-1422 / R1)</name>
    <dbReference type="NCBI Taxonomy" id="243230"/>
    <lineage>
        <taxon>Bacteria</taxon>
        <taxon>Thermotogati</taxon>
        <taxon>Deinococcota</taxon>
        <taxon>Deinococci</taxon>
        <taxon>Deinococcales</taxon>
        <taxon>Deinococcaceae</taxon>
        <taxon>Deinococcus</taxon>
    </lineage>
</organism>
<reference key="1">
    <citation type="journal article" date="1999" name="Science">
        <title>Genome sequence of the radioresistant bacterium Deinococcus radiodurans R1.</title>
        <authorList>
            <person name="White O."/>
            <person name="Eisen J.A."/>
            <person name="Heidelberg J.F."/>
            <person name="Hickey E.K."/>
            <person name="Peterson J.D."/>
            <person name="Dodson R.J."/>
            <person name="Haft D.H."/>
            <person name="Gwinn M.L."/>
            <person name="Nelson W.C."/>
            <person name="Richardson D.L."/>
            <person name="Moffat K.S."/>
            <person name="Qin H."/>
            <person name="Jiang L."/>
            <person name="Pamphile W."/>
            <person name="Crosby M."/>
            <person name="Shen M."/>
            <person name="Vamathevan J.J."/>
            <person name="Lam P."/>
            <person name="McDonald L.A."/>
            <person name="Utterback T.R."/>
            <person name="Zalewski C."/>
            <person name="Makarova K.S."/>
            <person name="Aravind L."/>
            <person name="Daly M.J."/>
            <person name="Minton K.W."/>
            <person name="Fleischmann R.D."/>
            <person name="Ketchum K.A."/>
            <person name="Nelson K.E."/>
            <person name="Salzberg S.L."/>
            <person name="Smith H.O."/>
            <person name="Venter J.C."/>
            <person name="Fraser C.M."/>
        </authorList>
    </citation>
    <scope>NUCLEOTIDE SEQUENCE [LARGE SCALE GENOMIC DNA]</scope>
    <source>
        <strain>ATCC 13939 / DSM 20539 / JCM 16871 / CCUG 27074 / LMG 4051 / NBRC 15346 / NCIMB 9279 / VKM B-1422 / R1</strain>
    </source>
</reference>
<proteinExistence type="inferred from homology"/>
<name>ACSA_DEIRA</name>
<sequence>MTHPNDHIDAMLHETRVIHPSAEFQAGTRVSRAEYERRYRQSLDQPDDFWSEVAHDLHWMKDWDRVLDWQEPHAQWFVGGQTNIAYNALDRNVQRGLGDKRAIIWEGEDGEVRTYTYAELLREVCKAANALEELGVVAGDRVTLYMPLIPEAAIAMLACARIGAVHSIVFGGFSVSALADRINNAQSKLLITADAGYRRGKPVTLKINADEAAKLAPCLEHVLVVKRAGIPLEWWTEGRDLWWHDVVDRQSDQHEATALDSEHPLFILYTSGSTGAPKGVQHTTGGYMVGTYLTTQTVFDLRDDDIYWCTADIGWITGHSYSVYGPLLNGATVVMYEGAPNQPDWGRFWDIVQKHRVTILYTAPTAIRSFMQHGDEIPGRYDLASLRLLGSVGEPINPEAWMWYYRVIGGERCPVVDTWWQTETGSIMLTTLPGAFPSKPGSAGLPMFGVEPALMTRDGEEIGDDDGGLLVIKRPWPSMLRTVYGDDERYRKSYWGEIPHVYFAGDGARRDHDGYYTIVGRVDDVLNVSGHRLGTMEIESALVAHPDVSEAAVVGRPDPVKGESVVAYVLLQDGHTADPAALRAHVSSEIGALARPDAIYIADALPKTRSGKIMRRFLRQLAAGQPVQGDTSTLEDPTVLERLQASPAL</sequence>
<evidence type="ECO:0000255" key="1">
    <source>
        <dbReference type="HAMAP-Rule" id="MF_01123"/>
    </source>
</evidence>
<evidence type="ECO:0000256" key="2">
    <source>
        <dbReference type="SAM" id="MobiDB-lite"/>
    </source>
</evidence>
<protein>
    <recommendedName>
        <fullName evidence="1">Acetyl-coenzyme A synthetase</fullName>
        <shortName evidence="1">AcCoA synthetase</shortName>
        <shortName evidence="1">Acs</shortName>
        <ecNumber evidence="1">6.2.1.1</ecNumber>
    </recommendedName>
    <alternativeName>
        <fullName evidence="1">Acetate--CoA ligase</fullName>
    </alternativeName>
    <alternativeName>
        <fullName evidence="1">Acyl-activating enzyme</fullName>
    </alternativeName>
</protein>
<dbReference type="EC" id="6.2.1.1" evidence="1"/>
<dbReference type="EMBL" id="AE000513">
    <property type="protein sequence ID" value="AAF12014.1"/>
    <property type="molecule type" value="Genomic_DNA"/>
</dbReference>
<dbReference type="PIR" id="D75270">
    <property type="entry name" value="D75270"/>
</dbReference>
<dbReference type="RefSeq" id="NP_296191.1">
    <property type="nucleotide sequence ID" value="NC_001263.1"/>
</dbReference>
<dbReference type="RefSeq" id="WP_010889096.1">
    <property type="nucleotide sequence ID" value="NC_001263.1"/>
</dbReference>
<dbReference type="SMR" id="Q9RRL7"/>
<dbReference type="FunCoup" id="Q9RRL7">
    <property type="interactions" value="394"/>
</dbReference>
<dbReference type="STRING" id="243230.DR_2471"/>
<dbReference type="PaxDb" id="243230-DR_2471"/>
<dbReference type="EnsemblBacteria" id="AAF12014">
    <property type="protein sequence ID" value="AAF12014"/>
    <property type="gene ID" value="DR_2471"/>
</dbReference>
<dbReference type="GeneID" id="69518724"/>
<dbReference type="KEGG" id="dra:DR_2471"/>
<dbReference type="PATRIC" id="fig|243230.17.peg.2707"/>
<dbReference type="eggNOG" id="COG0365">
    <property type="taxonomic scope" value="Bacteria"/>
</dbReference>
<dbReference type="HOGENOM" id="CLU_000022_3_6_0"/>
<dbReference type="InParanoid" id="Q9RRL7"/>
<dbReference type="OrthoDB" id="9778383at2"/>
<dbReference type="Proteomes" id="UP000002524">
    <property type="component" value="Chromosome 1"/>
</dbReference>
<dbReference type="GO" id="GO:0005829">
    <property type="term" value="C:cytosol"/>
    <property type="evidence" value="ECO:0000318"/>
    <property type="project" value="GO_Central"/>
</dbReference>
<dbReference type="GO" id="GO:0003987">
    <property type="term" value="F:acetate-CoA ligase activity"/>
    <property type="evidence" value="ECO:0000318"/>
    <property type="project" value="GO_Central"/>
</dbReference>
<dbReference type="GO" id="GO:0016208">
    <property type="term" value="F:AMP binding"/>
    <property type="evidence" value="ECO:0007669"/>
    <property type="project" value="InterPro"/>
</dbReference>
<dbReference type="GO" id="GO:0005524">
    <property type="term" value="F:ATP binding"/>
    <property type="evidence" value="ECO:0007669"/>
    <property type="project" value="UniProtKB-KW"/>
</dbReference>
<dbReference type="GO" id="GO:0046872">
    <property type="term" value="F:metal ion binding"/>
    <property type="evidence" value="ECO:0007669"/>
    <property type="project" value="UniProtKB-KW"/>
</dbReference>
<dbReference type="GO" id="GO:0006085">
    <property type="term" value="P:acetyl-CoA biosynthetic process"/>
    <property type="evidence" value="ECO:0000318"/>
    <property type="project" value="GO_Central"/>
</dbReference>
<dbReference type="GO" id="GO:0019427">
    <property type="term" value="P:acetyl-CoA biosynthetic process from acetate"/>
    <property type="evidence" value="ECO:0007669"/>
    <property type="project" value="InterPro"/>
</dbReference>
<dbReference type="CDD" id="cd05966">
    <property type="entry name" value="ACS"/>
    <property type="match status" value="1"/>
</dbReference>
<dbReference type="FunFam" id="3.40.50.12780:FF:000001">
    <property type="entry name" value="Acetyl-coenzyme A synthetase"/>
    <property type="match status" value="1"/>
</dbReference>
<dbReference type="Gene3D" id="3.30.300.30">
    <property type="match status" value="1"/>
</dbReference>
<dbReference type="Gene3D" id="3.40.50.12780">
    <property type="entry name" value="N-terminal domain of ligase-like"/>
    <property type="match status" value="1"/>
</dbReference>
<dbReference type="HAMAP" id="MF_01123">
    <property type="entry name" value="Ac_CoA_synth"/>
    <property type="match status" value="1"/>
</dbReference>
<dbReference type="InterPro" id="IPR011904">
    <property type="entry name" value="Ac_CoA_lig"/>
</dbReference>
<dbReference type="InterPro" id="IPR032387">
    <property type="entry name" value="ACAS_N"/>
</dbReference>
<dbReference type="InterPro" id="IPR025110">
    <property type="entry name" value="AMP-bd_C"/>
</dbReference>
<dbReference type="InterPro" id="IPR045851">
    <property type="entry name" value="AMP-bd_C_sf"/>
</dbReference>
<dbReference type="InterPro" id="IPR020845">
    <property type="entry name" value="AMP-binding_CS"/>
</dbReference>
<dbReference type="InterPro" id="IPR000873">
    <property type="entry name" value="AMP-dep_synth/lig_dom"/>
</dbReference>
<dbReference type="InterPro" id="IPR042099">
    <property type="entry name" value="ANL_N_sf"/>
</dbReference>
<dbReference type="NCBIfam" id="TIGR02188">
    <property type="entry name" value="Ac_CoA_lig_AcsA"/>
    <property type="match status" value="1"/>
</dbReference>
<dbReference type="NCBIfam" id="NF001208">
    <property type="entry name" value="PRK00174.1"/>
    <property type="match status" value="1"/>
</dbReference>
<dbReference type="PANTHER" id="PTHR24095">
    <property type="entry name" value="ACETYL-COENZYME A SYNTHETASE"/>
    <property type="match status" value="1"/>
</dbReference>
<dbReference type="PANTHER" id="PTHR24095:SF14">
    <property type="entry name" value="ACETYL-COENZYME A SYNTHETASE 1"/>
    <property type="match status" value="1"/>
</dbReference>
<dbReference type="Pfam" id="PF16177">
    <property type="entry name" value="ACAS_N"/>
    <property type="match status" value="1"/>
</dbReference>
<dbReference type="Pfam" id="PF00501">
    <property type="entry name" value="AMP-binding"/>
    <property type="match status" value="1"/>
</dbReference>
<dbReference type="Pfam" id="PF13193">
    <property type="entry name" value="AMP-binding_C"/>
    <property type="match status" value="1"/>
</dbReference>
<dbReference type="SUPFAM" id="SSF56801">
    <property type="entry name" value="Acetyl-CoA synthetase-like"/>
    <property type="match status" value="1"/>
</dbReference>
<dbReference type="PROSITE" id="PS00455">
    <property type="entry name" value="AMP_BINDING"/>
    <property type="match status" value="1"/>
</dbReference>
<accession>Q9RRL7</accession>
<feature type="chain" id="PRO_0000208361" description="Acetyl-coenzyme A synthetase">
    <location>
        <begin position="1"/>
        <end position="649"/>
    </location>
</feature>
<feature type="region of interest" description="Disordered" evidence="2">
    <location>
        <begin position="625"/>
        <end position="649"/>
    </location>
</feature>
<feature type="binding site" evidence="1">
    <location>
        <begin position="198"/>
        <end position="201"/>
    </location>
    <ligand>
        <name>CoA</name>
        <dbReference type="ChEBI" id="CHEBI:57287"/>
    </ligand>
</feature>
<feature type="binding site" evidence="1">
    <location>
        <position position="317"/>
    </location>
    <ligand>
        <name>CoA</name>
        <dbReference type="ChEBI" id="CHEBI:57287"/>
    </ligand>
</feature>
<feature type="binding site" evidence="1">
    <location>
        <position position="341"/>
    </location>
    <ligand>
        <name>CoA</name>
        <dbReference type="ChEBI" id="CHEBI:57287"/>
    </ligand>
</feature>
<feature type="binding site" evidence="1">
    <location>
        <begin position="393"/>
        <end position="395"/>
    </location>
    <ligand>
        <name>ATP</name>
        <dbReference type="ChEBI" id="CHEBI:30616"/>
    </ligand>
</feature>
<feature type="binding site" evidence="1">
    <location>
        <begin position="417"/>
        <end position="422"/>
    </location>
    <ligand>
        <name>ATP</name>
        <dbReference type="ChEBI" id="CHEBI:30616"/>
    </ligand>
</feature>
<feature type="binding site" evidence="1">
    <location>
        <position position="506"/>
    </location>
    <ligand>
        <name>ATP</name>
        <dbReference type="ChEBI" id="CHEBI:30616"/>
    </ligand>
</feature>
<feature type="binding site" evidence="1">
    <location>
        <position position="521"/>
    </location>
    <ligand>
        <name>ATP</name>
        <dbReference type="ChEBI" id="CHEBI:30616"/>
    </ligand>
</feature>
<feature type="binding site" evidence="1">
    <location>
        <position position="529"/>
    </location>
    <ligand>
        <name>CoA</name>
        <dbReference type="ChEBI" id="CHEBI:57287"/>
    </ligand>
</feature>
<feature type="binding site" evidence="1">
    <location>
        <position position="532"/>
    </location>
    <ligand>
        <name>ATP</name>
        <dbReference type="ChEBI" id="CHEBI:30616"/>
    </ligand>
</feature>
<feature type="binding site" evidence="1">
    <location>
        <position position="543"/>
    </location>
    <ligand>
        <name>Mg(2+)</name>
        <dbReference type="ChEBI" id="CHEBI:18420"/>
    </ligand>
</feature>
<feature type="binding site" evidence="1">
    <location>
        <position position="545"/>
    </location>
    <ligand>
        <name>Mg(2+)</name>
        <dbReference type="ChEBI" id="CHEBI:18420"/>
    </ligand>
</feature>
<feature type="binding site" evidence="1">
    <location>
        <position position="548"/>
    </location>
    <ligand>
        <name>Mg(2+)</name>
        <dbReference type="ChEBI" id="CHEBI:18420"/>
    </ligand>
</feature>
<feature type="modified residue" description="N6-acetyllysine" evidence="1">
    <location>
        <position position="612"/>
    </location>
</feature>